<organism>
    <name type="scientific">Xenopus laevis</name>
    <name type="common">African clawed frog</name>
    <dbReference type="NCBI Taxonomy" id="8355"/>
    <lineage>
        <taxon>Eukaryota</taxon>
        <taxon>Metazoa</taxon>
        <taxon>Chordata</taxon>
        <taxon>Craniata</taxon>
        <taxon>Vertebrata</taxon>
        <taxon>Euteleostomi</taxon>
        <taxon>Amphibia</taxon>
        <taxon>Batrachia</taxon>
        <taxon>Anura</taxon>
        <taxon>Pipoidea</taxon>
        <taxon>Pipidae</taxon>
        <taxon>Xenopodinae</taxon>
        <taxon>Xenopus</taxon>
        <taxon>Xenopus</taxon>
    </lineage>
</organism>
<evidence type="ECO:0000250" key="1">
    <source>
        <dbReference type="UniProtKB" id="Q9BW30"/>
    </source>
</evidence>
<evidence type="ECO:0000256" key="2">
    <source>
        <dbReference type="SAM" id="MobiDB-lite"/>
    </source>
</evidence>
<evidence type="ECO:0000305" key="3"/>
<sequence length="176" mass="19094">MAENSDITSLEDSFRKFAIYGDTKATGQEMTGKNWSKLCKDCKVNDGKAVTGTDVDIVFSKVKAKSARVITYEEFTKALEELSAKRFKGKSKEEAYEAICKLVAGKEPVSAGITKAAATGAVDRLTDTSKYTGSHKERFDQTGKGKGKSGRETIVENTGYVGSYKLAGTYDAKVKK</sequence>
<dbReference type="EMBL" id="BC108514">
    <property type="protein sequence ID" value="AAI08515.1"/>
    <property type="molecule type" value="mRNA"/>
</dbReference>
<dbReference type="RefSeq" id="NP_001089831.1">
    <property type="nucleotide sequence ID" value="NM_001096362.1"/>
</dbReference>
<dbReference type="SMR" id="Q2VPM9"/>
<dbReference type="DNASU" id="734897"/>
<dbReference type="GeneID" id="734897"/>
<dbReference type="KEGG" id="xla:734897"/>
<dbReference type="AGR" id="Xenbase:XB-GENE-6078105"/>
<dbReference type="CTD" id="734897"/>
<dbReference type="Xenbase" id="XB-GENE-6078105">
    <property type="gene designation" value="tppp3.L"/>
</dbReference>
<dbReference type="OrthoDB" id="548799at2759"/>
<dbReference type="Proteomes" id="UP000186698">
    <property type="component" value="Chromosome 4L"/>
</dbReference>
<dbReference type="Bgee" id="734897">
    <property type="expression patterns" value="Expressed in brain and 14 other cell types or tissues"/>
</dbReference>
<dbReference type="GO" id="GO:0005737">
    <property type="term" value="C:cytoplasm"/>
    <property type="evidence" value="ECO:0007669"/>
    <property type="project" value="UniProtKB-SubCell"/>
</dbReference>
<dbReference type="GO" id="GO:0005874">
    <property type="term" value="C:microtubule"/>
    <property type="evidence" value="ECO:0007669"/>
    <property type="project" value="UniProtKB-KW"/>
</dbReference>
<dbReference type="GO" id="GO:0015631">
    <property type="term" value="F:tubulin binding"/>
    <property type="evidence" value="ECO:0000250"/>
    <property type="project" value="UniProtKB"/>
</dbReference>
<dbReference type="GO" id="GO:0001578">
    <property type="term" value="P:microtubule bundle formation"/>
    <property type="evidence" value="ECO:0000250"/>
    <property type="project" value="UniProtKB"/>
</dbReference>
<dbReference type="GO" id="GO:0046785">
    <property type="term" value="P:microtubule polymerization"/>
    <property type="evidence" value="ECO:0000318"/>
    <property type="project" value="GO_Central"/>
</dbReference>
<dbReference type="GO" id="GO:0032273">
    <property type="term" value="P:positive regulation of protein polymerization"/>
    <property type="evidence" value="ECO:0000318"/>
    <property type="project" value="GO_Central"/>
</dbReference>
<dbReference type="FunFam" id="1.10.238.10:FF:000057">
    <property type="entry name" value="Tubulin polymerization-promoting protein family member 3"/>
    <property type="match status" value="1"/>
</dbReference>
<dbReference type="Gene3D" id="1.10.238.10">
    <property type="entry name" value="EF-hand"/>
    <property type="match status" value="1"/>
</dbReference>
<dbReference type="InterPro" id="IPR011992">
    <property type="entry name" value="EF-hand-dom_pair"/>
</dbReference>
<dbReference type="InterPro" id="IPR008907">
    <property type="entry name" value="TPP/p25"/>
</dbReference>
<dbReference type="PANTHER" id="PTHR12932">
    <property type="entry name" value="P25 ALPHA-RELATED"/>
    <property type="match status" value="1"/>
</dbReference>
<dbReference type="PANTHER" id="PTHR12932:SF16">
    <property type="entry name" value="TUBULIN POLYMERIZATION-PROMOTING PROTEIN FAMILY MEMBER 3"/>
    <property type="match status" value="1"/>
</dbReference>
<dbReference type="Pfam" id="PF05517">
    <property type="entry name" value="p25-alpha"/>
    <property type="match status" value="1"/>
</dbReference>
<dbReference type="SUPFAM" id="SSF47473">
    <property type="entry name" value="EF-hand"/>
    <property type="match status" value="1"/>
</dbReference>
<reference key="1">
    <citation type="submission" date="2005-11" db="EMBL/GenBank/DDBJ databases">
        <authorList>
            <consortium name="NIH - Xenopus Gene Collection (XGC) project"/>
        </authorList>
    </citation>
    <scope>NUCLEOTIDE SEQUENCE [LARGE SCALE MRNA]</scope>
    <source>
        <tissue>Testis</tissue>
    </source>
</reference>
<comment type="function">
    <text evidence="1">Regulator of microtubule dynamic that has microtubule bundling activity.</text>
</comment>
<comment type="subcellular location">
    <subcellularLocation>
        <location evidence="1">Cytoplasm</location>
    </subcellularLocation>
    <subcellularLocation>
        <location evidence="1">Cytoplasm</location>
        <location evidence="1">Cytoskeleton</location>
    </subcellularLocation>
</comment>
<comment type="similarity">
    <text evidence="3">Belongs to the TPPP family.</text>
</comment>
<gene>
    <name type="primary">tppp3</name>
</gene>
<feature type="chain" id="PRO_0000289007" description="Tubulin polymerization-promoting protein family member 3">
    <location>
        <begin position="1"/>
        <end position="176"/>
    </location>
</feature>
<feature type="region of interest" description="Disordered" evidence="2">
    <location>
        <begin position="132"/>
        <end position="151"/>
    </location>
</feature>
<feature type="compositionally biased region" description="Basic and acidic residues" evidence="2">
    <location>
        <begin position="134"/>
        <end position="151"/>
    </location>
</feature>
<keyword id="KW-0963">Cytoplasm</keyword>
<keyword id="KW-0206">Cytoskeleton</keyword>
<keyword id="KW-0493">Microtubule</keyword>
<keyword id="KW-1185">Reference proteome</keyword>
<name>TPPP3_XENLA</name>
<proteinExistence type="evidence at transcript level"/>
<accession>Q2VPM9</accession>
<protein>
    <recommendedName>
        <fullName>Tubulin polymerization-promoting protein family member 3</fullName>
    </recommendedName>
</protein>